<accession>Q8L940</accession>
<accession>Q3KRU4</accession>
<accession>Q9M032</accession>
<protein>
    <recommendedName>
        <fullName>Pyridoxal 5'-phosphate synthase subunit PDX1.3</fullName>
        <shortName>AtPDX1.3</shortName>
        <shortName>AtPDX1;1</shortName>
        <shortName>PLP synthase subunit PDX1.3</shortName>
        <ecNumber evidence="6">4.3.3.6</ecNumber>
    </recommendedName>
</protein>
<sequence length="309" mass="33216">MEGTGVVAVYGNGAITEAKKSPFSVKVGLAQMLRGGVIMDVVNAEQARIAEEAGACAVMALERVPADIRAQGGVARMSDPQMIKEIKQAVTIPVMAKARIGHFVEAQILEAIGIDYIDESEVLTLADEDHHINKHNFRIPFVCGCRNLGEALRRIREGAAMIRTKGEAGTGNIIEAVRHVRSVNGDIRVLRNMDDDEVFTFAKKLAAPYDLVMQTKQLGRLPVVQFAAGGVATPADAALMMQLGCDGVFVGSGIFKSGDPARRARAIVQAVTHYSDPEMLVEVSCGLGEAMVGINLNDEKVERFANRSE</sequence>
<comment type="function">
    <text evidence="3 4 6">Catalyzes the formation of pyridoxal 5'-phosphate from ribose 5-phosphate (RBP), glyceraldehyde 3-phosphate (G3P) and ammonia. The ammonia is provided by PDX2. Can also use ribulose 5-phosphate and dihydroxyacetone phosphate as substrates, resulting from enzyme-catalyzed isomerization of RBP and G3P, respectively. Also plays an indirect role in resistance to singlet oxygen-generating photosensitizers.</text>
</comment>
<comment type="catalytic activity">
    <reaction evidence="6">
        <text>aldehydo-D-ribose 5-phosphate + D-glyceraldehyde 3-phosphate + L-glutamine = pyridoxal 5'-phosphate + L-glutamate + phosphate + 3 H2O + H(+)</text>
        <dbReference type="Rhea" id="RHEA:31507"/>
        <dbReference type="ChEBI" id="CHEBI:15377"/>
        <dbReference type="ChEBI" id="CHEBI:15378"/>
        <dbReference type="ChEBI" id="CHEBI:29985"/>
        <dbReference type="ChEBI" id="CHEBI:43474"/>
        <dbReference type="ChEBI" id="CHEBI:58273"/>
        <dbReference type="ChEBI" id="CHEBI:58359"/>
        <dbReference type="ChEBI" id="CHEBI:59776"/>
        <dbReference type="ChEBI" id="CHEBI:597326"/>
        <dbReference type="EC" id="4.3.3.6"/>
    </reaction>
</comment>
<comment type="pathway">
    <text>Cofactor biosynthesis; pyridoxal 5'-phosphate biosynthesis.</text>
</comment>
<comment type="subunit">
    <text evidence="5">Homodimer or heterodimer with PDX1.1 or PDX1.2. Interacts with PDX2.</text>
</comment>
<comment type="interaction">
    <interactant intactId="EBI-1545956">
        <id>Q8L940</id>
    </interactant>
    <interactant intactId="EBI-1545987">
        <id>Q9ZNR6</id>
        <label>PDX12</label>
    </interactant>
    <organismsDiffer>false</organismsDiffer>
    <experiments>5</experiments>
</comment>
<comment type="subcellular location">
    <subcellularLocation>
        <location>Cytoplasm</location>
    </subcellularLocation>
    <subcellularLocation>
        <location>Cell membrane</location>
    </subcellularLocation>
    <subcellularLocation>
        <location>Membrane</location>
    </subcellularLocation>
</comment>
<comment type="tissue specificity">
    <text evidence="4 5">Expressed in cotyledons, rapidly dividing root stele tissues, stems, leaves, flowers, mature pollen, and siliques.</text>
</comment>
<comment type="induction">
    <text evidence="4">Not induced by cold, salt, drought or UV stress, or by abscisic acid or jasmonic acid.</text>
</comment>
<comment type="disruption phenotype">
    <text evidence="4">Plants have a lower leaf carotenoid and chlorophyll a and b content, and are impaired both in root cell division and in root cell elongation. Mutant rsr4-1 can be complemented by the addition of any of the vitamin B6 vitamers, except pyridoxal 5'-phosphate.</text>
</comment>
<comment type="miscellaneous">
    <text>Vitamin B6 is an essential quencher of singlet oxygen in plants, that can protect cellular membranes from lipid peroxidation.</text>
</comment>
<comment type="similarity">
    <text evidence="7">Belongs to the PdxS/SNZ family.</text>
</comment>
<organism>
    <name type="scientific">Arabidopsis thaliana</name>
    <name type="common">Mouse-ear cress</name>
    <dbReference type="NCBI Taxonomy" id="3702"/>
    <lineage>
        <taxon>Eukaryota</taxon>
        <taxon>Viridiplantae</taxon>
        <taxon>Streptophyta</taxon>
        <taxon>Embryophyta</taxon>
        <taxon>Tracheophyta</taxon>
        <taxon>Spermatophyta</taxon>
        <taxon>Magnoliopsida</taxon>
        <taxon>eudicotyledons</taxon>
        <taxon>Gunneridae</taxon>
        <taxon>Pentapetalae</taxon>
        <taxon>rosids</taxon>
        <taxon>malvids</taxon>
        <taxon>Brassicales</taxon>
        <taxon>Brassicaceae</taxon>
        <taxon>Camelineae</taxon>
        <taxon>Arabidopsis</taxon>
    </lineage>
</organism>
<reference key="1">
    <citation type="journal article" date="2005" name="Plant J.">
        <title>Pyridoxine is required for post-embryonic root development and tolerance to osmotic and oxidative stresses.</title>
        <authorList>
            <person name="Chen H."/>
            <person name="Xiong L."/>
        </authorList>
    </citation>
    <scope>FUNCTION</scope>
    <scope>TISSUE SPECIFICITY</scope>
    <scope>INDUCTION</scope>
    <scope>SUBCELLULAR LOCATION</scope>
    <scope>DISRUPTION PHENOTYPE</scope>
</reference>
<reference key="2">
    <citation type="journal article" date="2006" name="Plant Cell">
        <title>Analysis of the Arabidopsis rsr4-1/pdx1-3 mutant reveals the critical function of the PDX1 protein family in metabolism, development, and vitamin B6 biosynthesis.</title>
        <authorList>
            <person name="Wagner S."/>
            <person name="Bernhardt A."/>
            <person name="Leuendorf J.E."/>
            <person name="Drewke C."/>
            <person name="Lytovchenko A."/>
            <person name="Mujahed N."/>
            <person name="Gurgui C."/>
            <person name="Frommer W.B."/>
            <person name="Leistner E."/>
            <person name="Fernie A.R."/>
            <person name="Hellmann H."/>
        </authorList>
    </citation>
    <scope>NUCLEOTIDE SEQUENCE [GENOMIC DNA]</scope>
    <scope>MUTAGENESIS OF GLY-54</scope>
    <scope>TISSUE SPECIFICITY</scope>
    <scope>INTERACTION WITH PDX1.1; PDX1.2 AND PDX2</scope>
    <source>
        <strain>cv. C24</strain>
    </source>
</reference>
<reference key="3">
    <citation type="journal article" date="2000" name="Nature">
        <title>Sequence and analysis of chromosome 5 of the plant Arabidopsis thaliana.</title>
        <authorList>
            <person name="Tabata S."/>
            <person name="Kaneko T."/>
            <person name="Nakamura Y."/>
            <person name="Kotani H."/>
            <person name="Kato T."/>
            <person name="Asamizu E."/>
            <person name="Miyajima N."/>
            <person name="Sasamoto S."/>
            <person name="Kimura T."/>
            <person name="Hosouchi T."/>
            <person name="Kawashima K."/>
            <person name="Kohara M."/>
            <person name="Matsumoto M."/>
            <person name="Matsuno A."/>
            <person name="Muraki A."/>
            <person name="Nakayama S."/>
            <person name="Nakazaki N."/>
            <person name="Naruo K."/>
            <person name="Okumura S."/>
            <person name="Shinpo S."/>
            <person name="Takeuchi C."/>
            <person name="Wada T."/>
            <person name="Watanabe A."/>
            <person name="Yamada M."/>
            <person name="Yasuda M."/>
            <person name="Sato S."/>
            <person name="de la Bastide M."/>
            <person name="Huang E."/>
            <person name="Spiegel L."/>
            <person name="Gnoj L."/>
            <person name="O'Shaughnessy A."/>
            <person name="Preston R."/>
            <person name="Habermann K."/>
            <person name="Murray J."/>
            <person name="Johnson D."/>
            <person name="Rohlfing T."/>
            <person name="Nelson J."/>
            <person name="Stoneking T."/>
            <person name="Pepin K."/>
            <person name="Spieth J."/>
            <person name="Sekhon M."/>
            <person name="Armstrong J."/>
            <person name="Becker M."/>
            <person name="Belter E."/>
            <person name="Cordum H."/>
            <person name="Cordes M."/>
            <person name="Courtney L."/>
            <person name="Courtney W."/>
            <person name="Dante M."/>
            <person name="Du H."/>
            <person name="Edwards J."/>
            <person name="Fryman J."/>
            <person name="Haakensen B."/>
            <person name="Lamar E."/>
            <person name="Latreille P."/>
            <person name="Leonard S."/>
            <person name="Meyer R."/>
            <person name="Mulvaney E."/>
            <person name="Ozersky P."/>
            <person name="Riley A."/>
            <person name="Strowmatt C."/>
            <person name="Wagner-McPherson C."/>
            <person name="Wollam A."/>
            <person name="Yoakum M."/>
            <person name="Bell M."/>
            <person name="Dedhia N."/>
            <person name="Parnell L."/>
            <person name="Shah R."/>
            <person name="Rodriguez M."/>
            <person name="Hoon See L."/>
            <person name="Vil D."/>
            <person name="Baker J."/>
            <person name="Kirchoff K."/>
            <person name="Toth K."/>
            <person name="King L."/>
            <person name="Bahret A."/>
            <person name="Miller B."/>
            <person name="Marra M.A."/>
            <person name="Martienssen R."/>
            <person name="McCombie W.R."/>
            <person name="Wilson R.K."/>
            <person name="Murphy G."/>
            <person name="Bancroft I."/>
            <person name="Volckaert G."/>
            <person name="Wambutt R."/>
            <person name="Duesterhoeft A."/>
            <person name="Stiekema W."/>
            <person name="Pohl T."/>
            <person name="Entian K.-D."/>
            <person name="Terryn N."/>
            <person name="Hartley N."/>
            <person name="Bent E."/>
            <person name="Johnson S."/>
            <person name="Langham S.-A."/>
            <person name="McCullagh B."/>
            <person name="Robben J."/>
            <person name="Grymonprez B."/>
            <person name="Zimmermann W."/>
            <person name="Ramsperger U."/>
            <person name="Wedler H."/>
            <person name="Balke K."/>
            <person name="Wedler E."/>
            <person name="Peters S."/>
            <person name="van Staveren M."/>
            <person name="Dirkse W."/>
            <person name="Mooijman P."/>
            <person name="Klein Lankhorst R."/>
            <person name="Weitzenegger T."/>
            <person name="Bothe G."/>
            <person name="Rose M."/>
            <person name="Hauf J."/>
            <person name="Berneiser S."/>
            <person name="Hempel S."/>
            <person name="Feldpausch M."/>
            <person name="Lamberth S."/>
            <person name="Villarroel R."/>
            <person name="Gielen J."/>
            <person name="Ardiles W."/>
            <person name="Bents O."/>
            <person name="Lemcke K."/>
            <person name="Kolesov G."/>
            <person name="Mayer K.F.X."/>
            <person name="Rudd S."/>
            <person name="Schoof H."/>
            <person name="Schueller C."/>
            <person name="Zaccaria P."/>
            <person name="Mewes H.-W."/>
            <person name="Bevan M."/>
            <person name="Fransz P.F."/>
        </authorList>
    </citation>
    <scope>NUCLEOTIDE SEQUENCE [LARGE SCALE GENOMIC DNA]</scope>
    <source>
        <strain>cv. Columbia</strain>
    </source>
</reference>
<reference key="4">
    <citation type="journal article" date="2017" name="Plant J.">
        <title>Araport11: a complete reannotation of the Arabidopsis thaliana reference genome.</title>
        <authorList>
            <person name="Cheng C.Y."/>
            <person name="Krishnakumar V."/>
            <person name="Chan A.P."/>
            <person name="Thibaud-Nissen F."/>
            <person name="Schobel S."/>
            <person name="Town C.D."/>
        </authorList>
    </citation>
    <scope>GENOME REANNOTATION</scope>
    <source>
        <strain>cv. Columbia</strain>
    </source>
</reference>
<reference key="5">
    <citation type="journal article" date="2003" name="Science">
        <title>Empirical analysis of transcriptional activity in the Arabidopsis genome.</title>
        <authorList>
            <person name="Yamada K."/>
            <person name="Lim J."/>
            <person name="Dale J.M."/>
            <person name="Chen H."/>
            <person name="Shinn P."/>
            <person name="Palm C.J."/>
            <person name="Southwick A.M."/>
            <person name="Wu H.C."/>
            <person name="Kim C.J."/>
            <person name="Nguyen M."/>
            <person name="Pham P.K."/>
            <person name="Cheuk R.F."/>
            <person name="Karlin-Newmann G."/>
            <person name="Liu S.X."/>
            <person name="Lam B."/>
            <person name="Sakano H."/>
            <person name="Wu T."/>
            <person name="Yu G."/>
            <person name="Miranda M."/>
            <person name="Quach H.L."/>
            <person name="Tripp M."/>
            <person name="Chang C.H."/>
            <person name="Lee J.M."/>
            <person name="Toriumi M.J."/>
            <person name="Chan M.M."/>
            <person name="Tang C.C."/>
            <person name="Onodera C.S."/>
            <person name="Deng J.M."/>
            <person name="Akiyama K."/>
            <person name="Ansari Y."/>
            <person name="Arakawa T."/>
            <person name="Banh J."/>
            <person name="Banno F."/>
            <person name="Bowser L."/>
            <person name="Brooks S.Y."/>
            <person name="Carninci P."/>
            <person name="Chao Q."/>
            <person name="Choy N."/>
            <person name="Enju A."/>
            <person name="Goldsmith A.D."/>
            <person name="Gurjal M."/>
            <person name="Hansen N.F."/>
            <person name="Hayashizaki Y."/>
            <person name="Johnson-Hopson C."/>
            <person name="Hsuan V.W."/>
            <person name="Iida K."/>
            <person name="Karnes M."/>
            <person name="Khan S."/>
            <person name="Koesema E."/>
            <person name="Ishida J."/>
            <person name="Jiang P.X."/>
            <person name="Jones T."/>
            <person name="Kawai J."/>
            <person name="Kamiya A."/>
            <person name="Meyers C."/>
            <person name="Nakajima M."/>
            <person name="Narusaka M."/>
            <person name="Seki M."/>
            <person name="Sakurai T."/>
            <person name="Satou M."/>
            <person name="Tamse R."/>
            <person name="Vaysberg M."/>
            <person name="Wallender E.K."/>
            <person name="Wong C."/>
            <person name="Yamamura Y."/>
            <person name="Yuan S."/>
            <person name="Shinozaki K."/>
            <person name="Davis R.W."/>
            <person name="Theologis A."/>
            <person name="Ecker J.R."/>
        </authorList>
    </citation>
    <scope>NUCLEOTIDE SEQUENCE [LARGE SCALE MRNA]</scope>
    <source>
        <strain>cv. Columbia</strain>
    </source>
</reference>
<reference key="6">
    <citation type="submission" date="2002-03" db="EMBL/GenBank/DDBJ databases">
        <title>Full-length cDNA from Arabidopsis thaliana.</title>
        <authorList>
            <person name="Brover V.V."/>
            <person name="Troukhan M.E."/>
            <person name="Alexandrov N.A."/>
            <person name="Lu Y.-P."/>
            <person name="Flavell R.B."/>
            <person name="Feldmann K.A."/>
        </authorList>
    </citation>
    <scope>NUCLEOTIDE SEQUENCE [LARGE SCALE MRNA]</scope>
</reference>
<reference key="7">
    <citation type="submission" date="2006-07" db="EMBL/GenBank/DDBJ databases">
        <title>Large-scale analysis of RIKEN Arabidopsis full-length (RAFL) cDNAs.</title>
        <authorList>
            <person name="Totoki Y."/>
            <person name="Seki M."/>
            <person name="Ishida J."/>
            <person name="Nakajima M."/>
            <person name="Enju A."/>
            <person name="Kamiya A."/>
            <person name="Narusaka M."/>
            <person name="Shin-i T."/>
            <person name="Nakagawa M."/>
            <person name="Sakamoto N."/>
            <person name="Oishi K."/>
            <person name="Kohara Y."/>
            <person name="Kobayashi M."/>
            <person name="Toyoda A."/>
            <person name="Sakaki Y."/>
            <person name="Sakurai T."/>
            <person name="Iida K."/>
            <person name="Akiyama K."/>
            <person name="Satou M."/>
            <person name="Toyoda T."/>
            <person name="Konagaya A."/>
            <person name="Carninci P."/>
            <person name="Kawai J."/>
            <person name="Hayashizaki Y."/>
            <person name="Shinozaki K."/>
        </authorList>
    </citation>
    <scope>NUCLEOTIDE SEQUENCE [LARGE SCALE MRNA]</scope>
    <source>
        <strain>cv. Columbia</strain>
    </source>
</reference>
<reference key="8">
    <citation type="journal article" date="2005" name="Proc. Natl. Acad. Sci. U.S.A.">
        <title>Vitamin B6 biosynthesis in higher plants.</title>
        <authorList>
            <person name="Tambasco-Studart M."/>
            <person name="Titiz O."/>
            <person name="Raschle T."/>
            <person name="Forster G."/>
            <person name="Amrhein N."/>
            <person name="Fitzpatrick T.B."/>
        </authorList>
    </citation>
    <scope>FUNCTION</scope>
    <scope>SUBCELLULAR LOCATION</scope>
</reference>
<reference key="9">
    <citation type="journal article" date="2007" name="Plant Physiol.">
        <title>Functional analysis of PDX2 from Arabidopsis, a glutaminase involved in vitamin B6 biosynthesis.</title>
        <authorList>
            <person name="Tambasco-Studart M."/>
            <person name="Tews I."/>
            <person name="Amrhein N."/>
            <person name="Fitzpatrick T.B."/>
        </authorList>
    </citation>
    <scope>FUNCTION</scope>
    <scope>CATALYTIC ACTIVITY</scope>
</reference>
<reference key="10">
    <citation type="journal article" date="2012" name="Mol. Cell. Proteomics">
        <title>Comparative large-scale characterisation of plant vs. mammal proteins reveals similar and idiosyncratic N-alpha acetylation features.</title>
        <authorList>
            <person name="Bienvenut W.V."/>
            <person name="Sumpton D."/>
            <person name="Martinez A."/>
            <person name="Lilla S."/>
            <person name="Espagne C."/>
            <person name="Meinnel T."/>
            <person name="Giglione C."/>
        </authorList>
    </citation>
    <scope>ACETYLATION [LARGE SCALE ANALYSIS] AT MET-1</scope>
    <scope>IDENTIFICATION BY MASS SPECTROMETRY [LARGE SCALE ANALYSIS]</scope>
</reference>
<gene>
    <name type="primary">PDX13</name>
    <name type="synonym">GIP2</name>
    <name type="synonym">PDX1L3</name>
    <name type="synonym">RSR4</name>
    <name type="ordered locus">At5g01410</name>
    <name type="ORF">T10O8.120</name>
</gene>
<evidence type="ECO:0000250" key="1">
    <source>
        <dbReference type="UniProtKB" id="O59080"/>
    </source>
</evidence>
<evidence type="ECO:0000250" key="2">
    <source>
        <dbReference type="UniProtKB" id="Q03148"/>
    </source>
</evidence>
<evidence type="ECO:0000269" key="3">
    <source>
    </source>
</evidence>
<evidence type="ECO:0000269" key="4">
    <source>
    </source>
</evidence>
<evidence type="ECO:0000269" key="5">
    <source>
    </source>
</evidence>
<evidence type="ECO:0000269" key="6">
    <source>
    </source>
</evidence>
<evidence type="ECO:0000305" key="7"/>
<evidence type="ECO:0007744" key="8">
    <source>
    </source>
</evidence>
<evidence type="ECO:0007829" key="9">
    <source>
        <dbReference type="PDB" id="5LNR"/>
    </source>
</evidence>
<evidence type="ECO:0007829" key="10">
    <source>
        <dbReference type="PDB" id="5LNS"/>
    </source>
</evidence>
<evidence type="ECO:0007829" key="11">
    <source>
        <dbReference type="PDB" id="5LNU"/>
    </source>
</evidence>
<feature type="chain" id="PRO_0000109368" description="Pyridoxal 5'-phosphate synthase subunit PDX1.3">
    <location>
        <begin position="1"/>
        <end position="309"/>
    </location>
</feature>
<feature type="active site" description="Schiff-base intermediate with D-ribose 5-phosphate" evidence="1">
    <location>
        <position position="97"/>
    </location>
</feature>
<feature type="binding site" evidence="1">
    <location>
        <position position="40"/>
    </location>
    <ligand>
        <name>D-ribose 5-phosphate</name>
        <dbReference type="ChEBI" id="CHEBI:78346"/>
    </ligand>
</feature>
<feature type="binding site" evidence="1">
    <location>
        <position position="169"/>
    </location>
    <ligand>
        <name>D-ribose 5-phosphate</name>
        <dbReference type="ChEBI" id="CHEBI:78346"/>
    </ligand>
</feature>
<feature type="binding site" evidence="2">
    <location>
        <position position="181"/>
    </location>
    <ligand>
        <name>D-glyceraldehyde 3-phosphate</name>
        <dbReference type="ChEBI" id="CHEBI:59776"/>
    </ligand>
</feature>
<feature type="binding site" evidence="1">
    <location>
        <position position="230"/>
    </location>
    <ligand>
        <name>D-ribose 5-phosphate</name>
        <dbReference type="ChEBI" id="CHEBI:78346"/>
    </ligand>
</feature>
<feature type="binding site" evidence="1">
    <location>
        <begin position="251"/>
        <end position="252"/>
    </location>
    <ligand>
        <name>D-ribose 5-phosphate</name>
        <dbReference type="ChEBI" id="CHEBI:78346"/>
    </ligand>
</feature>
<feature type="modified residue" description="N-acetylmethionine" evidence="8">
    <location>
        <position position="1"/>
    </location>
</feature>
<feature type="mutagenesis site" description="In rsr4-1; strongly reduced oligomerization and 63% reduction in pyridoxal biosynthesis." evidence="5">
    <original>G</original>
    <variation>S</variation>
    <location>
        <position position="54"/>
    </location>
</feature>
<feature type="sequence conflict" description="In Ref. 6; AAM66972." evidence="7" ref="6">
    <original>F</original>
    <variation>S</variation>
    <location>
        <position position="226"/>
    </location>
</feature>
<feature type="helix" evidence="9">
    <location>
        <begin position="22"/>
        <end position="30"/>
    </location>
</feature>
<feature type="helix" evidence="9">
    <location>
        <begin position="31"/>
        <end position="33"/>
    </location>
</feature>
<feature type="strand" evidence="9">
    <location>
        <begin position="36"/>
        <end position="43"/>
    </location>
</feature>
<feature type="helix" evidence="9">
    <location>
        <begin position="44"/>
        <end position="52"/>
    </location>
</feature>
<feature type="strand" evidence="9">
    <location>
        <begin position="56"/>
        <end position="60"/>
    </location>
</feature>
<feature type="helix" evidence="9">
    <location>
        <begin position="65"/>
        <end position="70"/>
    </location>
</feature>
<feature type="helix" evidence="9">
    <location>
        <begin position="80"/>
        <end position="89"/>
    </location>
</feature>
<feature type="strand" evidence="9">
    <location>
        <begin position="94"/>
        <end position="99"/>
    </location>
</feature>
<feature type="helix" evidence="9">
    <location>
        <begin position="103"/>
        <end position="112"/>
    </location>
</feature>
<feature type="strand" evidence="9">
    <location>
        <begin position="115"/>
        <end position="120"/>
    </location>
</feature>
<feature type="helix" evidence="9">
    <location>
        <begin position="134"/>
        <end position="136"/>
    </location>
</feature>
<feature type="strand" evidence="9">
    <location>
        <begin position="141"/>
        <end position="147"/>
    </location>
</feature>
<feature type="helix" evidence="9">
    <location>
        <begin position="148"/>
        <end position="157"/>
    </location>
</feature>
<feature type="strand" evidence="9">
    <location>
        <begin position="160"/>
        <end position="164"/>
    </location>
</feature>
<feature type="strand" evidence="11">
    <location>
        <begin position="168"/>
        <end position="170"/>
    </location>
</feature>
<feature type="helix" evidence="9">
    <location>
        <begin position="174"/>
        <end position="192"/>
    </location>
</feature>
<feature type="helix" evidence="9">
    <location>
        <begin position="195"/>
        <end position="197"/>
    </location>
</feature>
<feature type="helix" evidence="9">
    <location>
        <begin position="198"/>
        <end position="205"/>
    </location>
</feature>
<feature type="helix" evidence="9">
    <location>
        <begin position="209"/>
        <end position="218"/>
    </location>
</feature>
<feature type="strand" evidence="9">
    <location>
        <begin position="222"/>
        <end position="227"/>
    </location>
</feature>
<feature type="helix" evidence="9">
    <location>
        <begin position="234"/>
        <end position="243"/>
    </location>
</feature>
<feature type="strand" evidence="9">
    <location>
        <begin position="246"/>
        <end position="250"/>
    </location>
</feature>
<feature type="helix" evidence="9">
    <location>
        <begin position="253"/>
        <end position="256"/>
    </location>
</feature>
<feature type="strand" evidence="10">
    <location>
        <begin position="257"/>
        <end position="259"/>
    </location>
</feature>
<feature type="helix" evidence="9">
    <location>
        <begin position="260"/>
        <end position="272"/>
    </location>
</feature>
<feature type="turn" evidence="9">
    <location>
        <begin position="273"/>
        <end position="275"/>
    </location>
</feature>
<feature type="helix" evidence="9">
    <location>
        <begin position="277"/>
        <end position="284"/>
    </location>
</feature>
<name>PDX13_ARATH</name>
<proteinExistence type="evidence at protein level"/>
<dbReference type="EC" id="4.3.3.6" evidence="6"/>
<dbReference type="EMBL" id="AY972813">
    <property type="protein sequence ID" value="AAY42123.1"/>
    <property type="molecule type" value="mRNA"/>
</dbReference>
<dbReference type="EMBL" id="AL161746">
    <property type="protein sequence ID" value="CAB81924.1"/>
    <property type="molecule type" value="Genomic_DNA"/>
</dbReference>
<dbReference type="EMBL" id="CP002688">
    <property type="protein sequence ID" value="AED90340.1"/>
    <property type="molecule type" value="Genomic_DNA"/>
</dbReference>
<dbReference type="EMBL" id="CP002688">
    <property type="protein sequence ID" value="ANM69812.1"/>
    <property type="molecule type" value="Genomic_DNA"/>
</dbReference>
<dbReference type="EMBL" id="AF428298">
    <property type="protein sequence ID" value="AAL16130.1"/>
    <property type="molecule type" value="mRNA"/>
</dbReference>
<dbReference type="EMBL" id="AF446352">
    <property type="protein sequence ID" value="AAL48227.1"/>
    <property type="molecule type" value="mRNA"/>
</dbReference>
<dbReference type="EMBL" id="AY097428">
    <property type="protein sequence ID" value="AAM19944.1"/>
    <property type="molecule type" value="mRNA"/>
</dbReference>
<dbReference type="EMBL" id="AY088650">
    <property type="protein sequence ID" value="AAM66972.1"/>
    <property type="molecule type" value="mRNA"/>
</dbReference>
<dbReference type="EMBL" id="AK227197">
    <property type="protein sequence ID" value="BAE99236.1"/>
    <property type="molecule type" value="mRNA"/>
</dbReference>
<dbReference type="PIR" id="T48163">
    <property type="entry name" value="T48163"/>
</dbReference>
<dbReference type="RefSeq" id="NP_001331465.1">
    <property type="nucleotide sequence ID" value="NM_001342589.1"/>
</dbReference>
<dbReference type="RefSeq" id="NP_195761.1">
    <property type="nucleotide sequence ID" value="NM_120219.2"/>
</dbReference>
<dbReference type="PDB" id="5K2Z">
    <property type="method" value="X-ray"/>
    <property type="resolution" value="1.80 A"/>
    <property type="chains" value="A/B/C/D=1-309"/>
</dbReference>
<dbReference type="PDB" id="5K3V">
    <property type="method" value="X-ray"/>
    <property type="resolution" value="1.90 A"/>
    <property type="chains" value="A/B/C/D=1-309"/>
</dbReference>
<dbReference type="PDB" id="5LNR">
    <property type="method" value="X-ray"/>
    <property type="resolution" value="1.61 A"/>
    <property type="chains" value="A/B/C/D=1-309"/>
</dbReference>
<dbReference type="PDB" id="5LNS">
    <property type="method" value="X-ray"/>
    <property type="resolution" value="1.91 A"/>
    <property type="chains" value="A/B/C/D=1-309"/>
</dbReference>
<dbReference type="PDB" id="5LNU">
    <property type="method" value="X-ray"/>
    <property type="resolution" value="1.73 A"/>
    <property type="chains" value="A/B/C/D=1-309"/>
</dbReference>
<dbReference type="PDB" id="5LNV">
    <property type="method" value="X-ray"/>
    <property type="resolution" value="2.24 A"/>
    <property type="chains" value="A/B/C/D=1-309"/>
</dbReference>
<dbReference type="PDB" id="5LNW">
    <property type="method" value="X-ray"/>
    <property type="resolution" value="1.90 A"/>
    <property type="chains" value="A/B/C/D=1-309"/>
</dbReference>
<dbReference type="PDB" id="6HX3">
    <property type="method" value="X-ray"/>
    <property type="resolution" value="2.00 A"/>
    <property type="chains" value="B/D/F/H=21-290"/>
</dbReference>
<dbReference type="PDB" id="6HXG">
    <property type="method" value="X-ray"/>
    <property type="resolution" value="1.90 A"/>
    <property type="chains" value="B/D/F/H=21-291"/>
</dbReference>
<dbReference type="PDB" id="6HYE">
    <property type="method" value="X-ray"/>
    <property type="resolution" value="2.53 A"/>
    <property type="chains" value="B/D/F/H=1-309"/>
</dbReference>
<dbReference type="PDB" id="7LB6">
    <property type="method" value="EM"/>
    <property type="resolution" value="3.16 A"/>
    <property type="chains" value="M/N/O/P/Q/R/S/T/U/V/W/X=2-309"/>
</dbReference>
<dbReference type="PDB" id="7NHE">
    <property type="method" value="X-ray"/>
    <property type="resolution" value="2.23 A"/>
    <property type="chains" value="A/B/C/D=1-291"/>
</dbReference>
<dbReference type="PDB" id="7NHF">
    <property type="method" value="X-ray"/>
    <property type="resolution" value="2.35 A"/>
    <property type="chains" value="A/B/C/D=1-291"/>
</dbReference>
<dbReference type="PDB" id="8S2W">
    <property type="method" value="X-ray"/>
    <property type="resolution" value="2.50 A"/>
    <property type="chains" value="A/B/C/D=1-291"/>
</dbReference>
<dbReference type="PDB" id="8S2X">
    <property type="method" value="X-ray"/>
    <property type="resolution" value="2.50 A"/>
    <property type="chains" value="A/B/C/D=1-291"/>
</dbReference>
<dbReference type="PDBsum" id="5K2Z"/>
<dbReference type="PDBsum" id="5K3V"/>
<dbReference type="PDBsum" id="5LNR"/>
<dbReference type="PDBsum" id="5LNS"/>
<dbReference type="PDBsum" id="5LNU"/>
<dbReference type="PDBsum" id="5LNV"/>
<dbReference type="PDBsum" id="5LNW"/>
<dbReference type="PDBsum" id="6HX3"/>
<dbReference type="PDBsum" id="6HXG"/>
<dbReference type="PDBsum" id="6HYE"/>
<dbReference type="PDBsum" id="7LB6"/>
<dbReference type="PDBsum" id="7NHE"/>
<dbReference type="PDBsum" id="7NHF"/>
<dbReference type="PDBsum" id="8S2W"/>
<dbReference type="PDBsum" id="8S2X"/>
<dbReference type="SMR" id="Q8L940"/>
<dbReference type="BioGRID" id="17014">
    <property type="interactions" value="9"/>
</dbReference>
<dbReference type="FunCoup" id="Q8L940">
    <property type="interactions" value="823"/>
</dbReference>
<dbReference type="IntAct" id="Q8L940">
    <property type="interactions" value="4"/>
</dbReference>
<dbReference type="STRING" id="3702.Q8L940"/>
<dbReference type="iPTMnet" id="Q8L940"/>
<dbReference type="MetOSite" id="Q8L940"/>
<dbReference type="PaxDb" id="3702-AT5G01410.1"/>
<dbReference type="ProteomicsDB" id="251389"/>
<dbReference type="DNASU" id="831738"/>
<dbReference type="EnsemblPlants" id="AT5G01410.1">
    <property type="protein sequence ID" value="AT5G01410.1"/>
    <property type="gene ID" value="AT5G01410"/>
</dbReference>
<dbReference type="EnsemblPlants" id="AT5G01410.2">
    <property type="protein sequence ID" value="AT5G01410.2"/>
    <property type="gene ID" value="AT5G01410"/>
</dbReference>
<dbReference type="GeneID" id="831738"/>
<dbReference type="Gramene" id="AT5G01410.1">
    <property type="protein sequence ID" value="AT5G01410.1"/>
    <property type="gene ID" value="AT5G01410"/>
</dbReference>
<dbReference type="Gramene" id="AT5G01410.2">
    <property type="protein sequence ID" value="AT5G01410.2"/>
    <property type="gene ID" value="AT5G01410"/>
</dbReference>
<dbReference type="KEGG" id="ath:AT5G01410"/>
<dbReference type="Araport" id="AT5G01410"/>
<dbReference type="TAIR" id="AT5G01410">
    <property type="gene designation" value="RSR4"/>
</dbReference>
<dbReference type="eggNOG" id="KOG1606">
    <property type="taxonomic scope" value="Eukaryota"/>
</dbReference>
<dbReference type="HOGENOM" id="CLU_055352_1_0_1"/>
<dbReference type="InParanoid" id="Q8L940"/>
<dbReference type="OMA" id="RYANRGW"/>
<dbReference type="OrthoDB" id="1660966at2759"/>
<dbReference type="PhylomeDB" id="Q8L940"/>
<dbReference type="UniPathway" id="UPA00245"/>
<dbReference type="PRO" id="PR:Q8L940"/>
<dbReference type="Proteomes" id="UP000006548">
    <property type="component" value="Chromosome 5"/>
</dbReference>
<dbReference type="ExpressionAtlas" id="Q8L940">
    <property type="expression patterns" value="baseline and differential"/>
</dbReference>
<dbReference type="GO" id="GO:0005829">
    <property type="term" value="C:cytosol"/>
    <property type="evidence" value="ECO:0000314"/>
    <property type="project" value="TAIR"/>
</dbReference>
<dbReference type="GO" id="GO:0012505">
    <property type="term" value="C:endomembrane system"/>
    <property type="evidence" value="ECO:0000314"/>
    <property type="project" value="TAIR"/>
</dbReference>
<dbReference type="GO" id="GO:0005886">
    <property type="term" value="C:plasma membrane"/>
    <property type="evidence" value="ECO:0000314"/>
    <property type="project" value="TAIR"/>
</dbReference>
<dbReference type="GO" id="GO:0046982">
    <property type="term" value="F:protein heterodimerization activity"/>
    <property type="evidence" value="ECO:0000353"/>
    <property type="project" value="TAIR"/>
</dbReference>
<dbReference type="GO" id="GO:0042803">
    <property type="term" value="F:protein homodimerization activity"/>
    <property type="evidence" value="ECO:0000353"/>
    <property type="project" value="TAIR"/>
</dbReference>
<dbReference type="GO" id="GO:0036381">
    <property type="term" value="F:pyridoxal 5'-phosphate synthase (glutamine hydrolysing) activity"/>
    <property type="evidence" value="ECO:0007669"/>
    <property type="project" value="UniProtKB-EC"/>
</dbReference>
<dbReference type="GO" id="GO:0006520">
    <property type="term" value="P:amino acid metabolic process"/>
    <property type="evidence" value="ECO:0000315"/>
    <property type="project" value="TAIR"/>
</dbReference>
<dbReference type="GO" id="GO:0015994">
    <property type="term" value="P:chlorophyll metabolic process"/>
    <property type="evidence" value="ECO:0000315"/>
    <property type="project" value="TAIR"/>
</dbReference>
<dbReference type="GO" id="GO:0042538">
    <property type="term" value="P:hyperosmotic salinity response"/>
    <property type="evidence" value="ECO:0000315"/>
    <property type="project" value="TAIR"/>
</dbReference>
<dbReference type="GO" id="GO:0042823">
    <property type="term" value="P:pyridoxal phosphate biosynthetic process"/>
    <property type="evidence" value="ECO:0007669"/>
    <property type="project" value="UniProtKB-UniPathway"/>
</dbReference>
<dbReference type="GO" id="GO:0006982">
    <property type="term" value="P:response to lipid hydroperoxide"/>
    <property type="evidence" value="ECO:0000315"/>
    <property type="project" value="TAIR"/>
</dbReference>
<dbReference type="GO" id="GO:0010335">
    <property type="term" value="P:response to non-ionic osmotic stress"/>
    <property type="evidence" value="ECO:0000315"/>
    <property type="project" value="TAIR"/>
</dbReference>
<dbReference type="GO" id="GO:0006979">
    <property type="term" value="P:response to oxidative stress"/>
    <property type="evidence" value="ECO:0000315"/>
    <property type="project" value="TAIR"/>
</dbReference>
<dbReference type="GO" id="GO:0009651">
    <property type="term" value="P:response to salt stress"/>
    <property type="evidence" value="ECO:0000315"/>
    <property type="project" value="TAIR"/>
</dbReference>
<dbReference type="GO" id="GO:0010224">
    <property type="term" value="P:response to UV-B"/>
    <property type="evidence" value="ECO:0000316"/>
    <property type="project" value="TAIR"/>
</dbReference>
<dbReference type="CDD" id="cd04727">
    <property type="entry name" value="pdxS"/>
    <property type="match status" value="1"/>
</dbReference>
<dbReference type="FunFam" id="3.20.20.70:FF:000001">
    <property type="entry name" value="Pyridoxine biosynthesis protein PDX1"/>
    <property type="match status" value="1"/>
</dbReference>
<dbReference type="Gene3D" id="3.20.20.70">
    <property type="entry name" value="Aldolase class I"/>
    <property type="match status" value="1"/>
</dbReference>
<dbReference type="HAMAP" id="MF_01824">
    <property type="entry name" value="PdxS"/>
    <property type="match status" value="1"/>
</dbReference>
<dbReference type="InterPro" id="IPR013785">
    <property type="entry name" value="Aldolase_TIM"/>
</dbReference>
<dbReference type="InterPro" id="IPR001852">
    <property type="entry name" value="PdxS/SNZ"/>
</dbReference>
<dbReference type="InterPro" id="IPR033755">
    <property type="entry name" value="PdxS/SNZ_N"/>
</dbReference>
<dbReference type="InterPro" id="IPR011060">
    <property type="entry name" value="RibuloseP-bd_barrel"/>
</dbReference>
<dbReference type="NCBIfam" id="NF003215">
    <property type="entry name" value="PRK04180.1"/>
    <property type="match status" value="1"/>
</dbReference>
<dbReference type="NCBIfam" id="TIGR00343">
    <property type="entry name" value="pyridoxal 5'-phosphate synthase lyase subunit PdxS"/>
    <property type="match status" value="1"/>
</dbReference>
<dbReference type="PANTHER" id="PTHR31829">
    <property type="entry name" value="PYRIDOXAL 5'-PHOSPHATE SYNTHASE SUBUNIT SNZ1-RELATED"/>
    <property type="match status" value="1"/>
</dbReference>
<dbReference type="PANTHER" id="PTHR31829:SF0">
    <property type="entry name" value="PYRIDOXAL 5'-PHOSPHATE SYNTHASE SUBUNIT SNZ1-RELATED"/>
    <property type="match status" value="1"/>
</dbReference>
<dbReference type="Pfam" id="PF01680">
    <property type="entry name" value="SOR_SNZ"/>
    <property type="match status" value="1"/>
</dbReference>
<dbReference type="PIRSF" id="PIRSF029271">
    <property type="entry name" value="Pdx1"/>
    <property type="match status" value="1"/>
</dbReference>
<dbReference type="SUPFAM" id="SSF51366">
    <property type="entry name" value="Ribulose-phoshate binding barrel"/>
    <property type="match status" value="1"/>
</dbReference>
<dbReference type="PROSITE" id="PS01235">
    <property type="entry name" value="PDXS_SNZ_1"/>
    <property type="match status" value="1"/>
</dbReference>
<dbReference type="PROSITE" id="PS51129">
    <property type="entry name" value="PDXS_SNZ_2"/>
    <property type="match status" value="1"/>
</dbReference>
<keyword id="KW-0002">3D-structure</keyword>
<keyword id="KW-0007">Acetylation</keyword>
<keyword id="KW-1003">Cell membrane</keyword>
<keyword id="KW-0963">Cytoplasm</keyword>
<keyword id="KW-0456">Lyase</keyword>
<keyword id="KW-0472">Membrane</keyword>
<keyword id="KW-0663">Pyridoxal phosphate</keyword>
<keyword id="KW-1185">Reference proteome</keyword>
<keyword id="KW-0704">Schiff base</keyword>